<protein>
    <recommendedName>
        <fullName>Uncharacterized protein YNL034W</fullName>
    </recommendedName>
</protein>
<gene>
    <name type="ordered locus">YNL034W</name>
    <name type="ORF">N2740</name>
</gene>
<keyword id="KW-1185">Reference proteome</keyword>
<accession>P53963</accession>
<accession>D6W1E5</accession>
<evidence type="ECO:0000256" key="1">
    <source>
        <dbReference type="SAM" id="MobiDB-lite"/>
    </source>
</evidence>
<evidence type="ECO:0000305" key="2"/>
<name>YND4_YEAST</name>
<comment type="similarity">
    <text evidence="2">To yeast YNL018c.</text>
</comment>
<dbReference type="EMBL" id="Z71310">
    <property type="protein sequence ID" value="CAA95897.1"/>
    <property type="molecule type" value="Genomic_DNA"/>
</dbReference>
<dbReference type="EMBL" id="BK006947">
    <property type="protein sequence ID" value="DAA10511.1"/>
    <property type="molecule type" value="Genomic_DNA"/>
</dbReference>
<dbReference type="PIR" id="S62956">
    <property type="entry name" value="S62956"/>
</dbReference>
<dbReference type="RefSeq" id="NP_014364.1">
    <property type="nucleotide sequence ID" value="NM_001182873.1"/>
</dbReference>
<dbReference type="BioGRID" id="35793">
    <property type="interactions" value="33"/>
</dbReference>
<dbReference type="DIP" id="DIP-4377N"/>
<dbReference type="FunCoup" id="P53963">
    <property type="interactions" value="31"/>
</dbReference>
<dbReference type="STRING" id="4932.YNL034W"/>
<dbReference type="PaxDb" id="4932-YNL034W"/>
<dbReference type="EnsemblFungi" id="YNL034W_mRNA">
    <property type="protein sequence ID" value="YNL034W"/>
    <property type="gene ID" value="YNL034W"/>
</dbReference>
<dbReference type="GeneID" id="855697"/>
<dbReference type="KEGG" id="sce:YNL034W"/>
<dbReference type="AGR" id="SGD:S000004979"/>
<dbReference type="SGD" id="S000004979">
    <property type="gene designation" value="YNL034W"/>
</dbReference>
<dbReference type="VEuPathDB" id="FungiDB:YNL034W"/>
<dbReference type="eggNOG" id="ENOG502T01C">
    <property type="taxonomic scope" value="Eukaryota"/>
</dbReference>
<dbReference type="GeneTree" id="ENSGT00940000176557"/>
<dbReference type="HOGENOM" id="CLU_030375_0_0_1"/>
<dbReference type="InParanoid" id="P53963"/>
<dbReference type="OMA" id="EPYSIFC"/>
<dbReference type="OrthoDB" id="4045883at2759"/>
<dbReference type="BioCyc" id="YEAST:G3O-33071-MONOMER"/>
<dbReference type="BioGRID-ORCS" id="855697">
    <property type="hits" value="5 hits in 10 CRISPR screens"/>
</dbReference>
<dbReference type="PRO" id="PR:P53963"/>
<dbReference type="Proteomes" id="UP000002311">
    <property type="component" value="Chromosome XIV"/>
</dbReference>
<dbReference type="RNAct" id="P53963">
    <property type="molecule type" value="protein"/>
</dbReference>
<dbReference type="GO" id="GO:0043935">
    <property type="term" value="P:sexual sporulation resulting in formation of a cellular spore"/>
    <property type="evidence" value="ECO:0000315"/>
    <property type="project" value="SGD"/>
</dbReference>
<organism>
    <name type="scientific">Saccharomyces cerevisiae (strain ATCC 204508 / S288c)</name>
    <name type="common">Baker's yeast</name>
    <dbReference type="NCBI Taxonomy" id="559292"/>
    <lineage>
        <taxon>Eukaryota</taxon>
        <taxon>Fungi</taxon>
        <taxon>Dikarya</taxon>
        <taxon>Ascomycota</taxon>
        <taxon>Saccharomycotina</taxon>
        <taxon>Saccharomycetes</taxon>
        <taxon>Saccharomycetales</taxon>
        <taxon>Saccharomycetaceae</taxon>
        <taxon>Saccharomyces</taxon>
    </lineage>
</organism>
<feature type="chain" id="PRO_0000203458" description="Uncharacterized protein YNL034W">
    <location>
        <begin position="1"/>
        <end position="612"/>
    </location>
</feature>
<feature type="region of interest" description="Disordered" evidence="1">
    <location>
        <begin position="171"/>
        <end position="217"/>
    </location>
</feature>
<feature type="compositionally biased region" description="Polar residues" evidence="1">
    <location>
        <begin position="177"/>
        <end position="196"/>
    </location>
</feature>
<feature type="compositionally biased region" description="Low complexity" evidence="1">
    <location>
        <begin position="197"/>
        <end position="214"/>
    </location>
</feature>
<proteinExistence type="predicted"/>
<sequence length="612" mass="69373">MSTSFQEFKAFCNKVGLDFQWLNLQSSKSVPESGSSEGFSAVSDTVQENIRPATEPLNVNQSKDPVSNFFYDVKNAPLWNVYKRNHSGHSSTEACSGVSSGQASKNIPEAMVKETVLSNHDNVTIINELLPTSSAMHQEESTAMTTSYLLSHSVNDSCNVMLSSSSHNRAMLPPSLVQRNNATTSPTTDSASENNESVPSLTSSVSTSSSVYSSWNPPHSPHISSFPDGNFASLNAEVTCFDFRRTKDSRTKETNESIIPTEIYCPINSTDHHKHYPSQKSKQDACAPAPRNQNISCSVGSAAEFSQSNHTLTTVVPSYMQQYLDRPQNWFESKMGKYCPLFLRSTKNIDYDSLEFKFERKMIAVQYLLLDEQSEPRRYYNPSNKSIPFWKRPFNFDTMPSYDQLMEEAECRFYSYQYKYEGFQRIEPYSIFCPWKNTQREIDLVLDHIHFSLDVGEKKSLNRKGNITLDTLDSKVDPNIQIKPYQIFPSNNLVYEGLPHPAEQSLILSPGTSLIERAFQALIDICKESIPPSNDCTTRNHNSAPQLTVPEPSKPCRLLLVRESRTATELETNKKLWLHSQRRNIEVTVPMHPSEHGTKSRLRKWLSTFVHQ</sequence>
<reference key="1">
    <citation type="journal article" date="1997" name="Nature">
        <title>The nucleotide sequence of Saccharomyces cerevisiae chromosome XIV and its evolutionary implications.</title>
        <authorList>
            <person name="Philippsen P."/>
            <person name="Kleine K."/>
            <person name="Poehlmann R."/>
            <person name="Duesterhoeft A."/>
            <person name="Hamberg K."/>
            <person name="Hegemann J.H."/>
            <person name="Obermaier B."/>
            <person name="Urrestarazu L.A."/>
            <person name="Aert R."/>
            <person name="Albermann K."/>
            <person name="Altmann R."/>
            <person name="Andre B."/>
            <person name="Baladron V."/>
            <person name="Ballesta J.P.G."/>
            <person name="Becam A.-M."/>
            <person name="Beinhauer J.D."/>
            <person name="Boskovic J."/>
            <person name="Buitrago M.J."/>
            <person name="Bussereau F."/>
            <person name="Coster F."/>
            <person name="Crouzet M."/>
            <person name="D'Angelo M."/>
            <person name="Dal Pero F."/>
            <person name="De Antoni A."/>
            <person name="del Rey F."/>
            <person name="Doignon F."/>
            <person name="Domdey H."/>
            <person name="Dubois E."/>
            <person name="Fiedler T.A."/>
            <person name="Fleig U."/>
            <person name="Floeth M."/>
            <person name="Fritz C."/>
            <person name="Gaillardin C."/>
            <person name="Garcia-Cantalejo J.M."/>
            <person name="Glansdorff N."/>
            <person name="Goffeau A."/>
            <person name="Gueldener U."/>
            <person name="Herbert C.J."/>
            <person name="Heumann K."/>
            <person name="Heuss-Neitzel D."/>
            <person name="Hilbert H."/>
            <person name="Hinni K."/>
            <person name="Iraqui Houssaini I."/>
            <person name="Jacquet M."/>
            <person name="Jimenez A."/>
            <person name="Jonniaux J.-L."/>
            <person name="Karpfinger-Hartl L."/>
            <person name="Lanfranchi G."/>
            <person name="Lepingle A."/>
            <person name="Levesque H."/>
            <person name="Lyck R."/>
            <person name="Maftahi M."/>
            <person name="Mallet L."/>
            <person name="Maurer C.T.C."/>
            <person name="Messenguy F."/>
            <person name="Mewes H.-W."/>
            <person name="Moestl D."/>
            <person name="Nasr F."/>
            <person name="Nicaud J.-M."/>
            <person name="Niedenthal R.K."/>
            <person name="Pandolfo D."/>
            <person name="Pierard A."/>
            <person name="Piravandi E."/>
            <person name="Planta R.J."/>
            <person name="Pohl T.M."/>
            <person name="Purnelle B."/>
            <person name="Rebischung C."/>
            <person name="Remacha M.A."/>
            <person name="Revuelta J.L."/>
            <person name="Rinke M."/>
            <person name="Saiz J.E."/>
            <person name="Sartorello F."/>
            <person name="Scherens B."/>
            <person name="Sen-Gupta M."/>
            <person name="Soler-Mira A."/>
            <person name="Urbanus J.H.M."/>
            <person name="Valle G."/>
            <person name="Van Dyck L."/>
            <person name="Verhasselt P."/>
            <person name="Vierendeels F."/>
            <person name="Vissers S."/>
            <person name="Voet M."/>
            <person name="Volckaert G."/>
            <person name="Wach A."/>
            <person name="Wambutt R."/>
            <person name="Wedler H."/>
            <person name="Zollner A."/>
            <person name="Hani J."/>
        </authorList>
    </citation>
    <scope>NUCLEOTIDE SEQUENCE [LARGE SCALE GENOMIC DNA]</scope>
    <source>
        <strain>ATCC 204508 / S288c</strain>
    </source>
</reference>
<reference key="2">
    <citation type="journal article" date="2014" name="G3 (Bethesda)">
        <title>The reference genome sequence of Saccharomyces cerevisiae: Then and now.</title>
        <authorList>
            <person name="Engel S.R."/>
            <person name="Dietrich F.S."/>
            <person name="Fisk D.G."/>
            <person name="Binkley G."/>
            <person name="Balakrishnan R."/>
            <person name="Costanzo M.C."/>
            <person name="Dwight S.S."/>
            <person name="Hitz B.C."/>
            <person name="Karra K."/>
            <person name="Nash R.S."/>
            <person name="Weng S."/>
            <person name="Wong E.D."/>
            <person name="Lloyd P."/>
            <person name="Skrzypek M.S."/>
            <person name="Miyasato S.R."/>
            <person name="Simison M."/>
            <person name="Cherry J.M."/>
        </authorList>
    </citation>
    <scope>GENOME REANNOTATION</scope>
    <source>
        <strain>ATCC 204508 / S288c</strain>
    </source>
</reference>